<sequence length="293" mass="33588">MSVQTSQQTVNLQTEFKQTQIQEVLDDLDRELIGLQTVKTRIREIAALLLVDRLRQKLGLSSSNPGLHMSFTGSPGTGKTTVARKMADILYRLGYIKKGHLITVTRDDLVGQYIGHTAPKTKQVLKNAMGGVLFIDEAYYLYRPDNERDYGAEAIEILLQVMENQRDDLVIIFAGYKDKMDRFYTSNPGLASRVANHVNFPDYTPEELLMIGKIMLQEQQYQMTPEAEKVFLQYIQRRMEQPHFANARSVRNALDRARLRQANRIFATPGKKLTKFDLVTIQAEDILKSRLFQ</sequence>
<evidence type="ECO:0000255" key="1"/>
<evidence type="ECO:0000269" key="2">
    <source>
    </source>
</evidence>
<evidence type="ECO:0000269" key="3">
    <source>
    </source>
</evidence>
<evidence type="ECO:0000303" key="4">
    <source>
    </source>
</evidence>
<evidence type="ECO:0000305" key="5"/>
<keyword id="KW-0067">ATP-binding</keyword>
<keyword id="KW-0150">Chloroplast</keyword>
<keyword id="KW-0547">Nucleotide-binding</keyword>
<keyword id="KW-0934">Plastid</keyword>
<keyword id="KW-1185">Reference proteome</keyword>
<accession>O22025</accession>
<name>CFXQ_CYAM1</name>
<proteinExistence type="evidence at protein level"/>
<protein>
    <recommendedName>
        <fullName evidence="4">Ribulose bisphosphate carboxylase/oxygenase activase, chloroplastic</fullName>
        <shortName evidence="4">RuBisCO activase</shortName>
    </recommendedName>
    <alternativeName>
        <fullName evidence="5">Protein CfxQ homolog</fullName>
    </alternativeName>
</protein>
<feature type="chain" id="PRO_0000063038" description="Ribulose bisphosphate carboxylase/oxygenase activase, chloroplastic">
    <location>
        <begin position="1"/>
        <end position="293"/>
    </location>
</feature>
<feature type="binding site" evidence="1">
    <location>
        <begin position="75"/>
        <end position="82"/>
    </location>
    <ligand>
        <name>ATP</name>
        <dbReference type="ChEBI" id="CHEBI:30616"/>
    </ligand>
</feature>
<feature type="mutagenesis site" description="Abolishes ATPase and activase activities." evidence="3">
    <original>K</original>
    <variation>A</variation>
    <location>
        <position position="79"/>
    </location>
</feature>
<feature type="mutagenesis site" description="Increases ATPase activity and reduces activase activity 5-fold." evidence="3">
    <original>Y</original>
    <variation>A</variation>
    <location>
        <position position="113"/>
    </location>
</feature>
<feature type="mutagenesis site" description="Abolishes ATPase activity and slightly reduces activase activity." evidence="3">
    <original>E</original>
    <variation>Q</variation>
    <location>
        <position position="137"/>
    </location>
</feature>
<feature type="mutagenesis site" description="Abolishes ATPase and activase activities." evidence="3">
    <original>R</original>
    <variation>A</variation>
    <location>
        <position position="193"/>
    </location>
</feature>
<feature type="mutagenesis site" description="Reduces ATPase activity 2-fold and activase activity 8-fold." evidence="3">
    <original>R</original>
    <variation>A</variation>
    <location>
        <position position="238"/>
    </location>
</feature>
<feature type="sequence conflict" description="In Ref. 1; BAA22821." evidence="5" ref="1">
    <original>E</original>
    <variation>G</variation>
    <location>
        <position position="207"/>
    </location>
</feature>
<feature type="sequence conflict" description="In Ref. 1; BAA22821." evidence="5" ref="1">
    <original>R</original>
    <variation>S</variation>
    <location>
        <position position="251"/>
    </location>
</feature>
<organism>
    <name type="scientific">Cyanidioschyzon merolae (strain NIES-3377 / 10D)</name>
    <name type="common">Unicellular red alga</name>
    <dbReference type="NCBI Taxonomy" id="280699"/>
    <lineage>
        <taxon>Eukaryota</taxon>
        <taxon>Rhodophyta</taxon>
        <taxon>Bangiophyceae</taxon>
        <taxon>Cyanidiales</taxon>
        <taxon>Cyanidiaceae</taxon>
        <taxon>Cyanidioschyzon</taxon>
    </lineage>
</organism>
<geneLocation type="chloroplast"/>
<gene>
    <name evidence="4" type="primary">Rca</name>
    <name evidence="5" type="synonym">cfxQ</name>
</gene>
<dbReference type="EMBL" id="D63675">
    <property type="protein sequence ID" value="BAA22821.1"/>
    <property type="status" value="ALT_INIT"/>
    <property type="molecule type" value="Genomic_DNA"/>
</dbReference>
<dbReference type="EMBL" id="AB002583">
    <property type="protein sequence ID" value="BAC76109.1"/>
    <property type="molecule type" value="Genomic_DNA"/>
</dbReference>
<dbReference type="SMR" id="O22025"/>
<dbReference type="STRING" id="280699.O22025"/>
<dbReference type="EnsemblPlants" id="CMV015CT">
    <property type="protein sequence ID" value="CMV015CT"/>
    <property type="gene ID" value="CMV015C"/>
</dbReference>
<dbReference type="Gramene" id="CMV015CT">
    <property type="protein sequence ID" value="CMV015CT"/>
    <property type="gene ID" value="CMV015C"/>
</dbReference>
<dbReference type="KEGG" id="cme:CymeCp015"/>
<dbReference type="eggNOG" id="KOG0730">
    <property type="taxonomic scope" value="Eukaryota"/>
</dbReference>
<dbReference type="HOGENOM" id="CLU_008749_1_0_1"/>
<dbReference type="Proteomes" id="UP000007014">
    <property type="component" value="Chloroplast"/>
</dbReference>
<dbReference type="GO" id="GO:0009507">
    <property type="term" value="C:chloroplast"/>
    <property type="evidence" value="ECO:0007669"/>
    <property type="project" value="UniProtKB-SubCell"/>
</dbReference>
<dbReference type="GO" id="GO:0005524">
    <property type="term" value="F:ATP binding"/>
    <property type="evidence" value="ECO:0007669"/>
    <property type="project" value="UniProtKB-KW"/>
</dbReference>
<dbReference type="GO" id="GO:0016887">
    <property type="term" value="F:ATP hydrolysis activity"/>
    <property type="evidence" value="ECO:0007669"/>
    <property type="project" value="InterPro"/>
</dbReference>
<dbReference type="CDD" id="cd00009">
    <property type="entry name" value="AAA"/>
    <property type="match status" value="1"/>
</dbReference>
<dbReference type="FunFam" id="3.40.50.300:FF:000216">
    <property type="entry name" value="Type VII secretion ATPase EccA"/>
    <property type="match status" value="1"/>
</dbReference>
<dbReference type="Gene3D" id="1.10.8.60">
    <property type="match status" value="1"/>
</dbReference>
<dbReference type="Gene3D" id="3.40.50.300">
    <property type="entry name" value="P-loop containing nucleotide triphosphate hydrolases"/>
    <property type="match status" value="1"/>
</dbReference>
<dbReference type="InterPro" id="IPR003593">
    <property type="entry name" value="AAA+_ATPase"/>
</dbReference>
<dbReference type="InterPro" id="IPR041627">
    <property type="entry name" value="AAA_lid_6"/>
</dbReference>
<dbReference type="InterPro" id="IPR003959">
    <property type="entry name" value="ATPase_AAA_core"/>
</dbReference>
<dbReference type="InterPro" id="IPR000470">
    <property type="entry name" value="CbxX/CfqX_mono"/>
</dbReference>
<dbReference type="InterPro" id="IPR000641">
    <property type="entry name" value="CbxX/CfxQ"/>
</dbReference>
<dbReference type="InterPro" id="IPR050773">
    <property type="entry name" value="CbxX/CfxQ_RuBisCO_ESX"/>
</dbReference>
<dbReference type="InterPro" id="IPR027417">
    <property type="entry name" value="P-loop_NTPase"/>
</dbReference>
<dbReference type="NCBIfam" id="TIGR02880">
    <property type="entry name" value="cbbX_cfxQ"/>
    <property type="match status" value="1"/>
</dbReference>
<dbReference type="PANTHER" id="PTHR43392">
    <property type="entry name" value="AAA-TYPE ATPASE FAMILY PROTEIN / ANKYRIN REPEAT FAMILY PROTEIN"/>
    <property type="match status" value="1"/>
</dbReference>
<dbReference type="PANTHER" id="PTHR43392:SF2">
    <property type="entry name" value="AAA-TYPE ATPASE FAMILY PROTEIN _ ANKYRIN REPEAT FAMILY PROTEIN"/>
    <property type="match status" value="1"/>
</dbReference>
<dbReference type="Pfam" id="PF00004">
    <property type="entry name" value="AAA"/>
    <property type="match status" value="1"/>
</dbReference>
<dbReference type="Pfam" id="PF17866">
    <property type="entry name" value="AAA_lid_6"/>
    <property type="match status" value="1"/>
</dbReference>
<dbReference type="PRINTS" id="PR00819">
    <property type="entry name" value="CBXCFQXSUPER"/>
</dbReference>
<dbReference type="PRINTS" id="PR00820">
    <property type="entry name" value="CBXXCFQX"/>
</dbReference>
<dbReference type="SMART" id="SM00382">
    <property type="entry name" value="AAA"/>
    <property type="match status" value="1"/>
</dbReference>
<dbReference type="SUPFAM" id="SSF52540">
    <property type="entry name" value="P-loop containing nucleoside triphosphate hydrolases"/>
    <property type="match status" value="1"/>
</dbReference>
<comment type="function">
    <text evidence="2 3">Required for the expression of ribulose 1,5-bisphosphate carboxylase/oxygenase (RuBisCo) (PubMed:18506097). ATPase involved in the activation of red-type RuBisCo, which tends to form inactive complexes with its substrate ribulose 1,5-bisphosphate (RuBP) (PubMed:27872295). Catalyzes the release of RuBP from inhibited RuBisCo in an ATP-dependent manner (PubMed:27872295). Activation of RuBisCO involves the ATP-dependent carboxylation of the epsilon-amino group of lysine leading to a carbamate structure (PubMed:27872295). The nuclear-encoded subunit plays a more critical role in activase function than the plastidial-encoded subunit (PubMed:27872295).</text>
</comment>
<comment type="subunit">
    <text evidence="3">Forms homooligomers (PubMed:27872295). Forms heterohexameric rings with the nuclear-encoded Rca subunit consisting of 3 of each nuclear- and plastidial-encoded subunits that alternate in the ring (PubMed:27872295).</text>
</comment>
<comment type="subcellular location">
    <subcellularLocation>
        <location evidence="5">Plastid</location>
        <location evidence="5">Chloroplast</location>
    </subcellularLocation>
</comment>
<comment type="similarity">
    <text evidence="5">Belongs to the CbxX/CfxQ family.</text>
</comment>
<comment type="sequence caution" evidence="5">
    <conflict type="erroneous initiation">
        <sequence resource="EMBL-CDS" id="BAA22821"/>
    </conflict>
    <text>Extended N-terminus.</text>
</comment>
<reference key="1">
    <citation type="journal article" date="1997" name="J. Plant Res.">
        <title>Analysis of a plastid gene cluster reveals a close relationship between Cyanidioschyzon and Cyanidium.</title>
        <authorList>
            <person name="Ohta N."/>
            <person name="Sato N."/>
            <person name="Ueda K."/>
            <person name="Kuroiwa T."/>
        </authorList>
    </citation>
    <scope>NUCLEOTIDE SEQUENCE [GENOMIC DNA]</scope>
</reference>
<reference key="2">
    <citation type="journal article" date="2003" name="DNA Res.">
        <title>Complete sequence and analysis of the plastid genome of the unicellular red alga Cyanidioschyzon merolae.</title>
        <authorList>
            <person name="Ohta N."/>
            <person name="Matsuzaki M."/>
            <person name="Misumi O."/>
            <person name="Miyagishima S.-Y."/>
            <person name="Nozaki H."/>
            <person name="Tanaka K."/>
            <person name="Shin-i T."/>
            <person name="Kohara Y."/>
            <person name="Kuroiwa T."/>
        </authorList>
    </citation>
    <scope>NUCLEOTIDE SEQUENCE [LARGE SCALE GENOMIC DNA]</scope>
    <source>
        <strain>NIES-3377 / 10D</strain>
    </source>
</reference>
<reference key="3">
    <citation type="journal article" date="2008" name="Genes Genet. Syst.">
        <title>Functional analysis of the plastid and nuclear encoded CbbX proteins of Cyanidioschyzon merolae.</title>
        <authorList>
            <person name="Fujita K."/>
            <person name="Tanaka K."/>
            <person name="Sadaie Y."/>
            <person name="Ohta N."/>
        </authorList>
    </citation>
    <scope>FUNCTION</scope>
</reference>
<reference key="4">
    <citation type="journal article" date="2016" name="Proc. Natl. Acad. Sci. U.S.A.">
        <title>Characterization of the heterooligomeric red-type rubisco activase from red algae.</title>
        <authorList>
            <person name="Loganathan N."/>
            <person name="Tsai Y.C."/>
            <person name="Mueller-Cajar O."/>
        </authorList>
    </citation>
    <scope>FUNCTION</scope>
    <scope>SUBUNIT</scope>
    <scope>MUTAGENESIS OF LYS-79; TYR-113; GLU-137; ARG-193 AND ARG-238</scope>
</reference>